<comment type="function">
    <text evidence="1">Essential cell division protein that stabilizes the FtsZ protofilaments by cross-linking them and that serves as a cytoplasmic membrane anchor for the Z ring. Also required for the recruitment to the septal ring of downstream cell division proteins.</text>
</comment>
<comment type="subunit">
    <text evidence="1">Interacts with FtsZ via their C-terminal domains.</text>
</comment>
<comment type="subcellular location">
    <subcellularLocation>
        <location evidence="1">Cell inner membrane</location>
        <topology evidence="1">Single-pass type I membrane protein</topology>
    </subcellularLocation>
    <text evidence="1">Localizes to the Z ring in an FtsZ-dependent manner.</text>
</comment>
<comment type="similarity">
    <text evidence="1">Belongs to the ZipA family.</text>
</comment>
<protein>
    <recommendedName>
        <fullName evidence="1">Cell division protein ZipA</fullName>
    </recommendedName>
</protein>
<keyword id="KW-0131">Cell cycle</keyword>
<keyword id="KW-0132">Cell division</keyword>
<keyword id="KW-0997">Cell inner membrane</keyword>
<keyword id="KW-1003">Cell membrane</keyword>
<keyword id="KW-0472">Membrane</keyword>
<keyword id="KW-0812">Transmembrane</keyword>
<keyword id="KW-1133">Transmembrane helix</keyword>
<sequence length="328" mass="36098">MMQDLRLILIVVGAIAIIALLLHGLWTSRKERSSLFRDRPVKRTKQERVETPIESLDEGVGEVRVRTSHPQEKPSFNHLDDDDDEVPVIQHAETKSAQVKTASRQAPFASVQTDYDDPLLGGLSAEQPPHDLSRDPLLGKADESYSQPQHAEPPHVEKPAHQVAPQQHVESQQEPVAPAPEAKPQKLKETVLVLHVAAHHGGVIGGEVLLQSVLQSGFQFGEMGIFHRHLSPAGSGPVLFSLANMVKPGSFDPDTMSDFSTPGVSMFMMVPSYGDANQNFKLMLQSAQRIADDVGGVVLDDERRMMTPQKLESYKARIREVLDANTIA</sequence>
<organism>
    <name type="scientific">Yersinia pestis bv. Antiqua (strain Angola)</name>
    <dbReference type="NCBI Taxonomy" id="349746"/>
    <lineage>
        <taxon>Bacteria</taxon>
        <taxon>Pseudomonadati</taxon>
        <taxon>Pseudomonadota</taxon>
        <taxon>Gammaproteobacteria</taxon>
        <taxon>Enterobacterales</taxon>
        <taxon>Yersiniaceae</taxon>
        <taxon>Yersinia</taxon>
    </lineage>
</organism>
<name>ZIPA_YERPG</name>
<proteinExistence type="inferred from homology"/>
<dbReference type="EMBL" id="CP000901">
    <property type="protein sequence ID" value="ABX87007.1"/>
    <property type="molecule type" value="Genomic_DNA"/>
</dbReference>
<dbReference type="RefSeq" id="WP_002227089.1">
    <property type="nucleotide sequence ID" value="NZ_CP009935.1"/>
</dbReference>
<dbReference type="SMR" id="A9QZH1"/>
<dbReference type="GeneID" id="57975708"/>
<dbReference type="KEGG" id="ypg:YpAngola_A2745"/>
<dbReference type="PATRIC" id="fig|349746.12.peg.3774"/>
<dbReference type="GO" id="GO:0032153">
    <property type="term" value="C:cell division site"/>
    <property type="evidence" value="ECO:0007669"/>
    <property type="project" value="UniProtKB-UniRule"/>
</dbReference>
<dbReference type="GO" id="GO:0005886">
    <property type="term" value="C:plasma membrane"/>
    <property type="evidence" value="ECO:0007669"/>
    <property type="project" value="UniProtKB-SubCell"/>
</dbReference>
<dbReference type="GO" id="GO:0000917">
    <property type="term" value="P:division septum assembly"/>
    <property type="evidence" value="ECO:0007669"/>
    <property type="project" value="TreeGrafter"/>
</dbReference>
<dbReference type="GO" id="GO:0043093">
    <property type="term" value="P:FtsZ-dependent cytokinesis"/>
    <property type="evidence" value="ECO:0007669"/>
    <property type="project" value="UniProtKB-UniRule"/>
</dbReference>
<dbReference type="CDD" id="cd00231">
    <property type="entry name" value="ZipA"/>
    <property type="match status" value="1"/>
</dbReference>
<dbReference type="FunFam" id="3.30.1400.10:FF:000001">
    <property type="entry name" value="Cell division protein ZipA"/>
    <property type="match status" value="1"/>
</dbReference>
<dbReference type="Gene3D" id="3.30.1400.10">
    <property type="entry name" value="ZipA, C-terminal FtsZ-binding domain"/>
    <property type="match status" value="1"/>
</dbReference>
<dbReference type="HAMAP" id="MF_00509">
    <property type="entry name" value="ZipA"/>
    <property type="match status" value="1"/>
</dbReference>
<dbReference type="InterPro" id="IPR011919">
    <property type="entry name" value="Cell_div_ZipA"/>
</dbReference>
<dbReference type="InterPro" id="IPR007449">
    <property type="entry name" value="ZipA_FtsZ-bd_C"/>
</dbReference>
<dbReference type="InterPro" id="IPR036765">
    <property type="entry name" value="ZipA_FtsZ-bd_C_sf"/>
</dbReference>
<dbReference type="NCBIfam" id="TIGR02205">
    <property type="entry name" value="septum_zipA"/>
    <property type="match status" value="1"/>
</dbReference>
<dbReference type="PANTHER" id="PTHR38685">
    <property type="entry name" value="CELL DIVISION PROTEIN ZIPA"/>
    <property type="match status" value="1"/>
</dbReference>
<dbReference type="PANTHER" id="PTHR38685:SF1">
    <property type="entry name" value="CELL DIVISION PROTEIN ZIPA"/>
    <property type="match status" value="1"/>
</dbReference>
<dbReference type="Pfam" id="PF04354">
    <property type="entry name" value="ZipA_C"/>
    <property type="match status" value="1"/>
</dbReference>
<dbReference type="SMART" id="SM00771">
    <property type="entry name" value="ZipA_C"/>
    <property type="match status" value="1"/>
</dbReference>
<dbReference type="SUPFAM" id="SSF64383">
    <property type="entry name" value="Cell-division protein ZipA, C-terminal domain"/>
    <property type="match status" value="1"/>
</dbReference>
<accession>A9QZH1</accession>
<gene>
    <name evidence="1" type="primary">zipA</name>
    <name type="ordered locus">YpAngola_A2745</name>
</gene>
<evidence type="ECO:0000255" key="1">
    <source>
        <dbReference type="HAMAP-Rule" id="MF_00509"/>
    </source>
</evidence>
<evidence type="ECO:0000256" key="2">
    <source>
        <dbReference type="SAM" id="MobiDB-lite"/>
    </source>
</evidence>
<reference key="1">
    <citation type="journal article" date="2010" name="J. Bacteriol.">
        <title>Genome sequence of the deep-rooted Yersinia pestis strain Angola reveals new insights into the evolution and pangenome of the plague bacterium.</title>
        <authorList>
            <person name="Eppinger M."/>
            <person name="Worsham P.L."/>
            <person name="Nikolich M.P."/>
            <person name="Riley D.R."/>
            <person name="Sebastian Y."/>
            <person name="Mou S."/>
            <person name="Achtman M."/>
            <person name="Lindler L.E."/>
            <person name="Ravel J."/>
        </authorList>
    </citation>
    <scope>NUCLEOTIDE SEQUENCE [LARGE SCALE GENOMIC DNA]</scope>
    <source>
        <strain>Angola</strain>
    </source>
</reference>
<feature type="chain" id="PRO_1000127236" description="Cell division protein ZipA">
    <location>
        <begin position="1"/>
        <end position="328"/>
    </location>
</feature>
<feature type="topological domain" description="Periplasmic" evidence="1">
    <location>
        <begin position="1"/>
        <end position="6"/>
    </location>
</feature>
<feature type="transmembrane region" description="Helical" evidence="1">
    <location>
        <begin position="7"/>
        <end position="27"/>
    </location>
</feature>
<feature type="topological domain" description="Cytoplasmic" evidence="1">
    <location>
        <begin position="28"/>
        <end position="328"/>
    </location>
</feature>
<feature type="region of interest" description="Disordered" evidence="2">
    <location>
        <begin position="61"/>
        <end position="183"/>
    </location>
</feature>
<feature type="compositionally biased region" description="Basic and acidic residues" evidence="2">
    <location>
        <begin position="61"/>
        <end position="72"/>
    </location>
</feature>
<feature type="compositionally biased region" description="Polar residues" evidence="2">
    <location>
        <begin position="95"/>
        <end position="104"/>
    </location>
</feature>
<feature type="compositionally biased region" description="Polar residues" evidence="2">
    <location>
        <begin position="164"/>
        <end position="174"/>
    </location>
</feature>